<sequence length="277" mass="31461">MARSSIEQLTSFLRSVNGRAKKALSQNFLVDGNILRKILTTAEVQPGDWVLEIGPGFGALSEVLLSQGANVIALEKDPMFEESLSQLPMDIEITDACKYPLTSLEDKGWKGKGRIVANLPYHITTPLLTKFFLECPYRWKTVTVMIQDEVARRITAKPGDKDYGSLTVFLSFFADVQYAFKVSPNCFYPKPSVHSAVVHMRVHEQFALADSEIEEFFTLTRAAFGQRRKLLANSLKNLYPKDKVFQVLEQLGFSEKTRPETIFLEEYLKIFHLLKDI</sequence>
<reference key="1">
    <citation type="journal article" date="2008" name="Genome Res.">
        <title>Chlamydia trachomatis: genome sequence analysis of lymphogranuloma venereum isolates.</title>
        <authorList>
            <person name="Thomson N.R."/>
            <person name="Holden M.T.G."/>
            <person name="Carder C."/>
            <person name="Lennard N."/>
            <person name="Lockey S.J."/>
            <person name="Marsh P."/>
            <person name="Skipp P."/>
            <person name="O'Connor C.D."/>
            <person name="Goodhead I."/>
            <person name="Norbertzcak H."/>
            <person name="Harris B."/>
            <person name="Ormond D."/>
            <person name="Rance R."/>
            <person name="Quail M.A."/>
            <person name="Parkhill J."/>
            <person name="Stephens R.S."/>
            <person name="Clarke I.N."/>
        </authorList>
    </citation>
    <scope>NUCLEOTIDE SEQUENCE [LARGE SCALE GENOMIC DNA]</scope>
    <source>
        <strain>ATCC VR-902B / DSM 19102 / 434/Bu</strain>
    </source>
</reference>
<name>RSMA_CHLT2</name>
<proteinExistence type="inferred from homology"/>
<evidence type="ECO:0000255" key="1">
    <source>
        <dbReference type="HAMAP-Rule" id="MF_00607"/>
    </source>
</evidence>
<protein>
    <recommendedName>
        <fullName evidence="1">Ribosomal RNA small subunit methyltransferase A</fullName>
        <ecNumber evidence="1">2.1.1.182</ecNumber>
    </recommendedName>
    <alternativeName>
        <fullName evidence="1">16S rRNA (adenine(1518)-N(6)/adenine(1519)-N(6))-dimethyltransferase</fullName>
    </alternativeName>
    <alternativeName>
        <fullName evidence="1">16S rRNA dimethyladenosine transferase</fullName>
    </alternativeName>
    <alternativeName>
        <fullName evidence="1">16S rRNA dimethylase</fullName>
    </alternativeName>
    <alternativeName>
        <fullName evidence="1">S-adenosylmethionine-6-N', N'-adenosyl(rRNA) dimethyltransferase</fullName>
    </alternativeName>
</protein>
<keyword id="KW-0963">Cytoplasm</keyword>
<keyword id="KW-0489">Methyltransferase</keyword>
<keyword id="KW-0694">RNA-binding</keyword>
<keyword id="KW-0698">rRNA processing</keyword>
<keyword id="KW-0949">S-adenosyl-L-methionine</keyword>
<keyword id="KW-0808">Transferase</keyword>
<accession>B0B7S3</accession>
<feature type="chain" id="PRO_1000130259" description="Ribosomal RNA small subunit methyltransferase A">
    <location>
        <begin position="1"/>
        <end position="277"/>
    </location>
</feature>
<feature type="binding site" evidence="1">
    <location>
        <position position="27"/>
    </location>
    <ligand>
        <name>S-adenosyl-L-methionine</name>
        <dbReference type="ChEBI" id="CHEBI:59789"/>
    </ligand>
</feature>
<feature type="binding site" evidence="1">
    <location>
        <position position="29"/>
    </location>
    <ligand>
        <name>S-adenosyl-L-methionine</name>
        <dbReference type="ChEBI" id="CHEBI:59789"/>
    </ligand>
</feature>
<feature type="binding site" evidence="1">
    <location>
        <position position="54"/>
    </location>
    <ligand>
        <name>S-adenosyl-L-methionine</name>
        <dbReference type="ChEBI" id="CHEBI:59789"/>
    </ligand>
</feature>
<feature type="binding site" evidence="1">
    <location>
        <position position="75"/>
    </location>
    <ligand>
        <name>S-adenosyl-L-methionine</name>
        <dbReference type="ChEBI" id="CHEBI:59789"/>
    </ligand>
</feature>
<feature type="binding site" evidence="1">
    <location>
        <position position="95"/>
    </location>
    <ligand>
        <name>S-adenosyl-L-methionine</name>
        <dbReference type="ChEBI" id="CHEBI:59789"/>
    </ligand>
</feature>
<feature type="binding site" evidence="1">
    <location>
        <position position="118"/>
    </location>
    <ligand>
        <name>S-adenosyl-L-methionine</name>
        <dbReference type="ChEBI" id="CHEBI:59789"/>
    </ligand>
</feature>
<gene>
    <name evidence="1" type="primary">rsmA</name>
    <name evidence="1" type="synonym">ksgA</name>
    <name type="ordered locus">CTL0608</name>
</gene>
<dbReference type="EC" id="2.1.1.182" evidence="1"/>
<dbReference type="EMBL" id="AM884176">
    <property type="protein sequence ID" value="CAP04049.1"/>
    <property type="molecule type" value="Genomic_DNA"/>
</dbReference>
<dbReference type="RefSeq" id="WP_009873749.1">
    <property type="nucleotide sequence ID" value="NC_010287.1"/>
</dbReference>
<dbReference type="RefSeq" id="YP_001654684.1">
    <property type="nucleotide sequence ID" value="NC_010287.1"/>
</dbReference>
<dbReference type="SMR" id="B0B7S3"/>
<dbReference type="KEGG" id="ctb:CTL0608"/>
<dbReference type="PATRIC" id="fig|471472.4.peg.656"/>
<dbReference type="HOGENOM" id="CLU_041220_0_0_0"/>
<dbReference type="BRENDA" id="2.1.1.182">
    <property type="organism ID" value="1315"/>
</dbReference>
<dbReference type="Proteomes" id="UP001154402">
    <property type="component" value="Chromosome"/>
</dbReference>
<dbReference type="GO" id="GO:0005829">
    <property type="term" value="C:cytosol"/>
    <property type="evidence" value="ECO:0007669"/>
    <property type="project" value="TreeGrafter"/>
</dbReference>
<dbReference type="GO" id="GO:0052908">
    <property type="term" value="F:16S rRNA (adenine(1518)-N(6)/adenine(1519)-N(6))-dimethyltransferase activity"/>
    <property type="evidence" value="ECO:0007669"/>
    <property type="project" value="UniProtKB-EC"/>
</dbReference>
<dbReference type="GO" id="GO:0003723">
    <property type="term" value="F:RNA binding"/>
    <property type="evidence" value="ECO:0007669"/>
    <property type="project" value="UniProtKB-KW"/>
</dbReference>
<dbReference type="FunFam" id="3.40.50.150:FF:000594">
    <property type="entry name" value="Ribosomal RNA small subunit methyltransferase A"/>
    <property type="match status" value="1"/>
</dbReference>
<dbReference type="Gene3D" id="1.10.8.100">
    <property type="entry name" value="Ribosomal RNA adenine dimethylase-like, domain 2"/>
    <property type="match status" value="1"/>
</dbReference>
<dbReference type="Gene3D" id="3.40.50.150">
    <property type="entry name" value="Vaccinia Virus protein VP39"/>
    <property type="match status" value="1"/>
</dbReference>
<dbReference type="HAMAP" id="MF_00607">
    <property type="entry name" value="16SrRNA_methyltr_A"/>
    <property type="match status" value="1"/>
</dbReference>
<dbReference type="InterPro" id="IPR001737">
    <property type="entry name" value="KsgA/Erm"/>
</dbReference>
<dbReference type="InterPro" id="IPR023165">
    <property type="entry name" value="rRNA_Ade_diMease-like_C"/>
</dbReference>
<dbReference type="InterPro" id="IPR020596">
    <property type="entry name" value="rRNA_Ade_Mease_Trfase_CS"/>
</dbReference>
<dbReference type="InterPro" id="IPR020598">
    <property type="entry name" value="rRNA_Ade_methylase_Trfase_N"/>
</dbReference>
<dbReference type="InterPro" id="IPR011530">
    <property type="entry name" value="rRNA_adenine_dimethylase"/>
</dbReference>
<dbReference type="InterPro" id="IPR029063">
    <property type="entry name" value="SAM-dependent_MTases_sf"/>
</dbReference>
<dbReference type="NCBIfam" id="TIGR00755">
    <property type="entry name" value="ksgA"/>
    <property type="match status" value="1"/>
</dbReference>
<dbReference type="PANTHER" id="PTHR11727">
    <property type="entry name" value="DIMETHYLADENOSINE TRANSFERASE"/>
    <property type="match status" value="1"/>
</dbReference>
<dbReference type="PANTHER" id="PTHR11727:SF7">
    <property type="entry name" value="DIMETHYLADENOSINE TRANSFERASE-RELATED"/>
    <property type="match status" value="1"/>
</dbReference>
<dbReference type="Pfam" id="PF00398">
    <property type="entry name" value="RrnaAD"/>
    <property type="match status" value="1"/>
</dbReference>
<dbReference type="SMART" id="SM00650">
    <property type="entry name" value="rADc"/>
    <property type="match status" value="1"/>
</dbReference>
<dbReference type="SUPFAM" id="SSF53335">
    <property type="entry name" value="S-adenosyl-L-methionine-dependent methyltransferases"/>
    <property type="match status" value="1"/>
</dbReference>
<dbReference type="PROSITE" id="PS01131">
    <property type="entry name" value="RRNA_A_DIMETH"/>
    <property type="match status" value="1"/>
</dbReference>
<dbReference type="PROSITE" id="PS51689">
    <property type="entry name" value="SAM_RNA_A_N6_MT"/>
    <property type="match status" value="1"/>
</dbReference>
<comment type="function">
    <text evidence="1">Specifically dimethylates two adjacent adenosines (A1518 and A1519) in the loop of a conserved hairpin near the 3'-end of 16S rRNA in the 30S particle. May play a critical role in biogenesis of 30S subunits.</text>
</comment>
<comment type="catalytic activity">
    <reaction evidence="1">
        <text>adenosine(1518)/adenosine(1519) in 16S rRNA + 4 S-adenosyl-L-methionine = N(6)-dimethyladenosine(1518)/N(6)-dimethyladenosine(1519) in 16S rRNA + 4 S-adenosyl-L-homocysteine + 4 H(+)</text>
        <dbReference type="Rhea" id="RHEA:19609"/>
        <dbReference type="Rhea" id="RHEA-COMP:10232"/>
        <dbReference type="Rhea" id="RHEA-COMP:10233"/>
        <dbReference type="ChEBI" id="CHEBI:15378"/>
        <dbReference type="ChEBI" id="CHEBI:57856"/>
        <dbReference type="ChEBI" id="CHEBI:59789"/>
        <dbReference type="ChEBI" id="CHEBI:74411"/>
        <dbReference type="ChEBI" id="CHEBI:74493"/>
        <dbReference type="EC" id="2.1.1.182"/>
    </reaction>
</comment>
<comment type="subcellular location">
    <subcellularLocation>
        <location evidence="1">Cytoplasm</location>
    </subcellularLocation>
</comment>
<comment type="similarity">
    <text evidence="1">Belongs to the class I-like SAM-binding methyltransferase superfamily. rRNA adenine N(6)-methyltransferase family. RsmA subfamily.</text>
</comment>
<organism>
    <name type="scientific">Chlamydia trachomatis serovar L2 (strain ATCC VR-902B / DSM 19102 / 434/Bu)</name>
    <dbReference type="NCBI Taxonomy" id="471472"/>
    <lineage>
        <taxon>Bacteria</taxon>
        <taxon>Pseudomonadati</taxon>
        <taxon>Chlamydiota</taxon>
        <taxon>Chlamydiia</taxon>
        <taxon>Chlamydiales</taxon>
        <taxon>Chlamydiaceae</taxon>
        <taxon>Chlamydia/Chlamydophila group</taxon>
        <taxon>Chlamydia</taxon>
    </lineage>
</organism>